<organism>
    <name type="scientific">Mus musculus</name>
    <name type="common">Mouse</name>
    <dbReference type="NCBI Taxonomy" id="10090"/>
    <lineage>
        <taxon>Eukaryota</taxon>
        <taxon>Metazoa</taxon>
        <taxon>Chordata</taxon>
        <taxon>Craniata</taxon>
        <taxon>Vertebrata</taxon>
        <taxon>Euteleostomi</taxon>
        <taxon>Mammalia</taxon>
        <taxon>Eutheria</taxon>
        <taxon>Euarchontoglires</taxon>
        <taxon>Glires</taxon>
        <taxon>Rodentia</taxon>
        <taxon>Myomorpha</taxon>
        <taxon>Muroidea</taxon>
        <taxon>Muridae</taxon>
        <taxon>Murinae</taxon>
        <taxon>Mus</taxon>
        <taxon>Mus</taxon>
    </lineage>
</organism>
<name>PO210_MOUSE</name>
<sequence>MARASLVQPALWALLLLQVVGPAAAAKLNIPKVLLPFTRATRVNFTLEASEGCYRWSSTRPEVASIEPLGSSEQQCSQKAVVQARLTQPARLTSIIFAEDITTGQVLRCDAIVDLIHGIQIVSTTRELYLEDSPLELKIQALDSEGNTFSTLAGLVFDWTIVKDTEANGFSDSHNALRILTFLESTYIPPSYISEMEKAAKQGDTILVSGMKTGSSKLKARIQEAVYKNVRPAEVRLLILENILLNPAYDVYLLVGTSIHYKVQKIRQGKITELSMPSDQYELQLQNSIPDPQGDPARPVAILTQDTSRVTAMQMGQSNLVLGHRSIRMQGASRLPNSTIYVVEAGYLGFTVYPGDRWVLETGHLYAITIEVFDRSSNKVYPSDNIRIEAVLPAEFFEVLSSSQNGSYHHIRAIQSGQTAISATLTSVVDQDGGVHVLQVPVWNQQEVDIHIPITLYPSILTFPWQPKTGAYQYTIKAHGGSGNFSWSSSSSMVATVTVKGVMTTSGDTGLSVIRAHDVQNPLHFGEMKVYVIEPSSMEFAPCQVEARVGHTLELPLTISGFMPGGGSEVVTLSDCSHFDLVVEVENQGVFQPLPGRLPPGPEHCSGVKVKADAQGSTTLLVSYTHGHVHLDAKITLAAYLPLKAVDPSSVAVVTLGSSKEMLFEGGPRPWVLEPSKFFRNVTSEDTGSISLSLLGPPASRNYQQHRVLMTCQALGEQVIALSVGNRPSLSNPFPAVEPTVVKSICAPPSRLTLMPVYALPQLDLSCPLLQQNKQVVPVSSHRNPLLDLGAYDQQGRRFDNFSSLSIQWESSRPLLASIELDQPMQLVSQDDGNGQKKLHGLQTVSVHEASGTTAISATATGYQQSHLSEARVKQPHDPLVPVSASIELILVEDVRVSPEEMTIYNHPGVQVELYITEGSGYFFLNTSTQDIIKVAYQDTRGVALVHPLLPGSSTVMVHDLCLAFPAPAKAIIHVSDIQELYVRVVDKVEIGKAVKAYVRVLDFYKKPFLAKYFTFMDLKLQAASQIITLVTLDEALDNYTATFLVHGVAIGQTSLSASVTDKSGQRVSSTPQQIEVFPPFRLIPRKVTLIIGAMMQITSEGGPQPQSNILFSINNESVAAVSSSGLVRGLMVGNGSVLGVVQAVDAETGKVIIVSQDLVEVEVLQLQAVRIRAPITRMRTGTQMPVFVTGITSNQSPFSFGNAVPGLTFHWSVTKRDVLDLRGRHHEVSIRLPPQYNFAMNVYGRVKGRTGLRVVVKALDPTAGQLHGLGKELSDEIQIQVFEKLRLLNPEIEAEQILMSPNSFIKLQTNRDGAAILSYRVLDGPEKAPIVHTDEKGFLVSGSGIGVSTLEVIAQEPFGTNQTILVAVKVSPVSYLRISMSPVLHTQHKEALTALPLGMTVTFIVHFHDSSGDIFHAHNSVLNFATNRDDFVQIGKGATNNTCIIRTVSVGLTLLHVWDVEHLGLSDFVPLPVLQAITPELSGAVVVGDILCLASVLTSLGGVSGTWSSSASHVLYVDPKTGVAIARDAGSVTVYYEIAGQLKTFKEIVVGTPQKIVARRLHSAQTSIQEATASKVTVSVGDRSSNLLGECSPAQREAIEALHPESLISCQLQFKQDVFDFPACDVFTVEPGFDAALGQYLCSVTMRRLTDKQLKHLNMKKTSLAVTASIPSSYTSVEKVGAEVPFSPGLYANQAEILLSNHYTSSEVKVFGAVESLENLEVKSGSPAVLAFVKEKSFGLPSFITYTVGVLDPTAGSQGPLSTALTFSSPATNQAITIPVTVAFVLDRRGPGPYGASLLSHFLDSYQVMFFTFFALLAGTAVTIIAYHTVCAPRELASPLALTPRASPQHSPHYLASSPAAFNTLPSGRKASPPSGLWSPAYASH</sequence>
<reference key="1">
    <citation type="journal article" date="1999" name="Kidney Int.">
        <title>cDNA cloning and embryonic expression of mouse nuclear pore membrane glycoprotein 210 mRNA.</title>
        <authorList>
            <person name="Olsson M."/>
            <person name="Ekblom M."/>
            <person name="Fecker L."/>
            <person name="Kurkinen M."/>
            <person name="Ekblom P."/>
        </authorList>
    </citation>
    <scope>NUCLEOTIDE SEQUENCE [MRNA]</scope>
    <scope>DEVELOPMENTAL STAGE</scope>
    <source>
        <strain>NMRI</strain>
        <tissue>Kidney</tissue>
    </source>
</reference>
<reference key="2">
    <citation type="journal article" date="2004" name="Genome Res.">
        <title>The status, quality, and expansion of the NIH full-length cDNA project: the Mammalian Gene Collection (MGC).</title>
        <authorList>
            <consortium name="The MGC Project Team"/>
        </authorList>
    </citation>
    <scope>NUCLEOTIDE SEQUENCE [LARGE SCALE MRNA]</scope>
    <source>
        <strain>C57BL/6J</strain>
        <tissue>Brain</tissue>
    </source>
</reference>
<reference key="3">
    <citation type="journal article" date="2004" name="DNA Res.">
        <title>Prediction of the coding sequences of mouse homologues of KIAA gene: IV. The complete nucleotide sequences of 500 mouse KIAA-homologous cDNAs identified by screening of terminal sequences of cDNA clones randomly sampled from size-fractionated libraries.</title>
        <authorList>
            <person name="Okazaki N."/>
            <person name="Kikuno R."/>
            <person name="Ohara R."/>
            <person name="Inamoto S."/>
            <person name="Koseki H."/>
            <person name="Hiraoka S."/>
            <person name="Saga Y."/>
            <person name="Seino S."/>
            <person name="Nishimura M."/>
            <person name="Kaisho T."/>
            <person name="Hoshino K."/>
            <person name="Kitamura H."/>
            <person name="Nagase T."/>
            <person name="Ohara O."/>
            <person name="Koga H."/>
        </authorList>
    </citation>
    <scope>NUCLEOTIDE SEQUENCE [LARGE SCALE MRNA] OF 3-1886</scope>
    <source>
        <tissue>Thymus</tissue>
    </source>
</reference>
<reference key="4">
    <citation type="journal article" date="2005" name="Science">
        <title>The transcriptional landscape of the mammalian genome.</title>
        <authorList>
            <person name="Carninci P."/>
            <person name="Kasukawa T."/>
            <person name="Katayama S."/>
            <person name="Gough J."/>
            <person name="Frith M.C."/>
            <person name="Maeda N."/>
            <person name="Oyama R."/>
            <person name="Ravasi T."/>
            <person name="Lenhard B."/>
            <person name="Wells C."/>
            <person name="Kodzius R."/>
            <person name="Shimokawa K."/>
            <person name="Bajic V.B."/>
            <person name="Brenner S.E."/>
            <person name="Batalov S."/>
            <person name="Forrest A.R."/>
            <person name="Zavolan M."/>
            <person name="Davis M.J."/>
            <person name="Wilming L.G."/>
            <person name="Aidinis V."/>
            <person name="Allen J.E."/>
            <person name="Ambesi-Impiombato A."/>
            <person name="Apweiler R."/>
            <person name="Aturaliya R.N."/>
            <person name="Bailey T.L."/>
            <person name="Bansal M."/>
            <person name="Baxter L."/>
            <person name="Beisel K.W."/>
            <person name="Bersano T."/>
            <person name="Bono H."/>
            <person name="Chalk A.M."/>
            <person name="Chiu K.P."/>
            <person name="Choudhary V."/>
            <person name="Christoffels A."/>
            <person name="Clutterbuck D.R."/>
            <person name="Crowe M.L."/>
            <person name="Dalla E."/>
            <person name="Dalrymple B.P."/>
            <person name="de Bono B."/>
            <person name="Della Gatta G."/>
            <person name="di Bernardo D."/>
            <person name="Down T."/>
            <person name="Engstrom P."/>
            <person name="Fagiolini M."/>
            <person name="Faulkner G."/>
            <person name="Fletcher C.F."/>
            <person name="Fukushima T."/>
            <person name="Furuno M."/>
            <person name="Futaki S."/>
            <person name="Gariboldi M."/>
            <person name="Georgii-Hemming P."/>
            <person name="Gingeras T.R."/>
            <person name="Gojobori T."/>
            <person name="Green R.E."/>
            <person name="Gustincich S."/>
            <person name="Harbers M."/>
            <person name="Hayashi Y."/>
            <person name="Hensch T.K."/>
            <person name="Hirokawa N."/>
            <person name="Hill D."/>
            <person name="Huminiecki L."/>
            <person name="Iacono M."/>
            <person name="Ikeo K."/>
            <person name="Iwama A."/>
            <person name="Ishikawa T."/>
            <person name="Jakt M."/>
            <person name="Kanapin A."/>
            <person name="Katoh M."/>
            <person name="Kawasawa Y."/>
            <person name="Kelso J."/>
            <person name="Kitamura H."/>
            <person name="Kitano H."/>
            <person name="Kollias G."/>
            <person name="Krishnan S.P."/>
            <person name="Kruger A."/>
            <person name="Kummerfeld S.K."/>
            <person name="Kurochkin I.V."/>
            <person name="Lareau L.F."/>
            <person name="Lazarevic D."/>
            <person name="Lipovich L."/>
            <person name="Liu J."/>
            <person name="Liuni S."/>
            <person name="McWilliam S."/>
            <person name="Madan Babu M."/>
            <person name="Madera M."/>
            <person name="Marchionni L."/>
            <person name="Matsuda H."/>
            <person name="Matsuzawa S."/>
            <person name="Miki H."/>
            <person name="Mignone F."/>
            <person name="Miyake S."/>
            <person name="Morris K."/>
            <person name="Mottagui-Tabar S."/>
            <person name="Mulder N."/>
            <person name="Nakano N."/>
            <person name="Nakauchi H."/>
            <person name="Ng P."/>
            <person name="Nilsson R."/>
            <person name="Nishiguchi S."/>
            <person name="Nishikawa S."/>
            <person name="Nori F."/>
            <person name="Ohara O."/>
            <person name="Okazaki Y."/>
            <person name="Orlando V."/>
            <person name="Pang K.C."/>
            <person name="Pavan W.J."/>
            <person name="Pavesi G."/>
            <person name="Pesole G."/>
            <person name="Petrovsky N."/>
            <person name="Piazza S."/>
            <person name="Reed J."/>
            <person name="Reid J.F."/>
            <person name="Ring B.Z."/>
            <person name="Ringwald M."/>
            <person name="Rost B."/>
            <person name="Ruan Y."/>
            <person name="Salzberg S.L."/>
            <person name="Sandelin A."/>
            <person name="Schneider C."/>
            <person name="Schoenbach C."/>
            <person name="Sekiguchi K."/>
            <person name="Semple C.A."/>
            <person name="Seno S."/>
            <person name="Sessa L."/>
            <person name="Sheng Y."/>
            <person name="Shibata Y."/>
            <person name="Shimada H."/>
            <person name="Shimada K."/>
            <person name="Silva D."/>
            <person name="Sinclair B."/>
            <person name="Sperling S."/>
            <person name="Stupka E."/>
            <person name="Sugiura K."/>
            <person name="Sultana R."/>
            <person name="Takenaka Y."/>
            <person name="Taki K."/>
            <person name="Tammoja K."/>
            <person name="Tan S.L."/>
            <person name="Tang S."/>
            <person name="Taylor M.S."/>
            <person name="Tegner J."/>
            <person name="Teichmann S.A."/>
            <person name="Ueda H.R."/>
            <person name="van Nimwegen E."/>
            <person name="Verardo R."/>
            <person name="Wei C.L."/>
            <person name="Yagi K."/>
            <person name="Yamanishi H."/>
            <person name="Zabarovsky E."/>
            <person name="Zhu S."/>
            <person name="Zimmer A."/>
            <person name="Hide W."/>
            <person name="Bult C."/>
            <person name="Grimmond S.M."/>
            <person name="Teasdale R.D."/>
            <person name="Liu E.T."/>
            <person name="Brusic V."/>
            <person name="Quackenbush J."/>
            <person name="Wahlestedt C."/>
            <person name="Mattick J.S."/>
            <person name="Hume D.A."/>
            <person name="Kai C."/>
            <person name="Sasaki D."/>
            <person name="Tomaru Y."/>
            <person name="Fukuda S."/>
            <person name="Kanamori-Katayama M."/>
            <person name="Suzuki M."/>
            <person name="Aoki J."/>
            <person name="Arakawa T."/>
            <person name="Iida J."/>
            <person name="Imamura K."/>
            <person name="Itoh M."/>
            <person name="Kato T."/>
            <person name="Kawaji H."/>
            <person name="Kawagashira N."/>
            <person name="Kawashima T."/>
            <person name="Kojima M."/>
            <person name="Kondo S."/>
            <person name="Konno H."/>
            <person name="Nakano K."/>
            <person name="Ninomiya N."/>
            <person name="Nishio T."/>
            <person name="Okada M."/>
            <person name="Plessy C."/>
            <person name="Shibata K."/>
            <person name="Shiraki T."/>
            <person name="Suzuki S."/>
            <person name="Tagami M."/>
            <person name="Waki K."/>
            <person name="Watahiki A."/>
            <person name="Okamura-Oho Y."/>
            <person name="Suzuki H."/>
            <person name="Kawai J."/>
            <person name="Hayashizaki Y."/>
        </authorList>
    </citation>
    <scope>NUCLEOTIDE SEQUENCE [LARGE SCALE MRNA] OF 1-1160</scope>
    <source>
        <tissue>Spleen</tissue>
    </source>
</reference>
<reference key="5">
    <citation type="journal article" date="2007" name="Proc. Natl. Acad. Sci. U.S.A.">
        <title>Large-scale phosphorylation analysis of mouse liver.</title>
        <authorList>
            <person name="Villen J."/>
            <person name="Beausoleil S.A."/>
            <person name="Gerber S.A."/>
            <person name="Gygi S.P."/>
        </authorList>
    </citation>
    <scope>PHOSPHORYLATION [LARGE SCALE ANALYSIS] AT THR-1844</scope>
    <scope>IDENTIFICATION BY MASS SPECTROMETRY [LARGE SCALE ANALYSIS]</scope>
    <source>
        <tissue>Liver</tissue>
    </source>
</reference>
<reference key="6">
    <citation type="journal article" date="2009" name="Immunity">
        <title>The phagosomal proteome in interferon-gamma-activated macrophages.</title>
        <authorList>
            <person name="Trost M."/>
            <person name="English L."/>
            <person name="Lemieux S."/>
            <person name="Courcelles M."/>
            <person name="Desjardins M."/>
            <person name="Thibault P."/>
        </authorList>
    </citation>
    <scope>PHOSPHORYLATION [LARGE SCALE ANALYSIS] AT THR-1844</scope>
    <scope>IDENTIFICATION BY MASS SPECTROMETRY [LARGE SCALE ANALYSIS]</scope>
</reference>
<reference key="7">
    <citation type="journal article" date="2010" name="Cell">
        <title>A tissue-specific atlas of mouse protein phosphorylation and expression.</title>
        <authorList>
            <person name="Huttlin E.L."/>
            <person name="Jedrychowski M.P."/>
            <person name="Elias J.E."/>
            <person name="Goswami T."/>
            <person name="Rad R."/>
            <person name="Beausoleil S.A."/>
            <person name="Villen J."/>
            <person name="Haas W."/>
            <person name="Sowa M.E."/>
            <person name="Gygi S.P."/>
        </authorList>
    </citation>
    <scope>PHOSPHORYLATION [LARGE SCALE ANALYSIS] AT SER-1839; THR-1844 AND SER-1873</scope>
    <scope>IDENTIFICATION BY MASS SPECTROMETRY [LARGE SCALE ANALYSIS]</scope>
    <source>
        <tissue>Brain</tissue>
        <tissue>Kidney</tissue>
        <tissue>Lung</tissue>
        <tissue>Pancreas</tissue>
        <tissue>Spleen</tissue>
        <tissue>Testis</tissue>
    </source>
</reference>
<dbReference type="EMBL" id="AF113751">
    <property type="protein sequence ID" value="AAF21969.1"/>
    <property type="molecule type" value="mRNA"/>
</dbReference>
<dbReference type="EMBL" id="BC052468">
    <property type="protein sequence ID" value="AAH52468.1"/>
    <property type="molecule type" value="mRNA"/>
</dbReference>
<dbReference type="EMBL" id="AK173056">
    <property type="protein sequence ID" value="BAD32334.1"/>
    <property type="molecule type" value="mRNA"/>
</dbReference>
<dbReference type="EMBL" id="AK157272">
    <property type="protein sequence ID" value="BAE34024.1"/>
    <property type="molecule type" value="mRNA"/>
</dbReference>
<dbReference type="CCDS" id="CCDS39565.1"/>
<dbReference type="RefSeq" id="NP_061285.2">
    <property type="nucleotide sequence ID" value="NM_018815.2"/>
</dbReference>
<dbReference type="SMR" id="Q9QY81"/>
<dbReference type="BioGRID" id="207678">
    <property type="interactions" value="2"/>
</dbReference>
<dbReference type="ComplexPortal" id="CPX-4474">
    <property type="entry name" value="Nuclear pore complex"/>
</dbReference>
<dbReference type="FunCoup" id="Q9QY81">
    <property type="interactions" value="1919"/>
</dbReference>
<dbReference type="IntAct" id="Q9QY81">
    <property type="interactions" value="1"/>
</dbReference>
<dbReference type="STRING" id="10090.ENSMUSP00000032179"/>
<dbReference type="GlyConnect" id="2567">
    <property type="glycosylation" value="5 N-Linked glycans (4 sites)"/>
</dbReference>
<dbReference type="GlyCosmos" id="Q9QY81">
    <property type="glycosylation" value="12 sites, 5 glycans"/>
</dbReference>
<dbReference type="GlyGen" id="Q9QY81">
    <property type="glycosylation" value="12 sites, 10 N-linked glycans (8 sites)"/>
</dbReference>
<dbReference type="iPTMnet" id="Q9QY81"/>
<dbReference type="PhosphoSitePlus" id="Q9QY81"/>
<dbReference type="SwissPalm" id="Q9QY81"/>
<dbReference type="jPOST" id="Q9QY81"/>
<dbReference type="PaxDb" id="10090-ENSMUSP00000032179"/>
<dbReference type="PeptideAtlas" id="Q9QY81"/>
<dbReference type="ProteomicsDB" id="289353"/>
<dbReference type="Antibodypedia" id="10858">
    <property type="antibodies" value="210 antibodies from 27 providers"/>
</dbReference>
<dbReference type="DNASU" id="54563"/>
<dbReference type="Ensembl" id="ENSMUST00000032179.14">
    <property type="protein sequence ID" value="ENSMUSP00000032179.8"/>
    <property type="gene ID" value="ENSMUSG00000030091.18"/>
</dbReference>
<dbReference type="GeneID" id="54563"/>
<dbReference type="KEGG" id="mmu:54563"/>
<dbReference type="UCSC" id="uc009cxu.2">
    <property type="organism name" value="mouse"/>
</dbReference>
<dbReference type="AGR" id="MGI:1859555"/>
<dbReference type="CTD" id="23225"/>
<dbReference type="MGI" id="MGI:1859555">
    <property type="gene designation" value="Nup210"/>
</dbReference>
<dbReference type="VEuPathDB" id="HostDB:ENSMUSG00000030091"/>
<dbReference type="eggNOG" id="KOG1833">
    <property type="taxonomic scope" value="Eukaryota"/>
</dbReference>
<dbReference type="GeneTree" id="ENSGT00390000009491"/>
<dbReference type="HOGENOM" id="CLU_001205_1_1_1"/>
<dbReference type="InParanoid" id="Q9QY81"/>
<dbReference type="OMA" id="HNMYEGT"/>
<dbReference type="OrthoDB" id="361283at2759"/>
<dbReference type="PhylomeDB" id="Q9QY81"/>
<dbReference type="TreeFam" id="TF313331"/>
<dbReference type="Reactome" id="R-MMU-159227">
    <property type="pathway name" value="Transport of the SLBP independent Mature mRNA"/>
</dbReference>
<dbReference type="Reactome" id="R-MMU-159230">
    <property type="pathway name" value="Transport of the SLBP Dependant Mature mRNA"/>
</dbReference>
<dbReference type="Reactome" id="R-MMU-159231">
    <property type="pathway name" value="Transport of Mature mRNA Derived from an Intronless Transcript"/>
</dbReference>
<dbReference type="Reactome" id="R-MMU-159236">
    <property type="pathway name" value="Transport of Mature mRNA derived from an Intron-Containing Transcript"/>
</dbReference>
<dbReference type="Reactome" id="R-MMU-170822">
    <property type="pathway name" value="Regulation of Glucokinase by Glucokinase Regulatory Protein"/>
</dbReference>
<dbReference type="Reactome" id="R-MMU-191859">
    <property type="pathway name" value="snRNP Assembly"/>
</dbReference>
<dbReference type="Reactome" id="R-MMU-3108214">
    <property type="pathway name" value="SUMOylation of DNA damage response and repair proteins"/>
</dbReference>
<dbReference type="Reactome" id="R-MMU-3232142">
    <property type="pathway name" value="SUMOylation of ubiquitinylation proteins"/>
</dbReference>
<dbReference type="Reactome" id="R-MMU-3301854">
    <property type="pathway name" value="Nuclear Pore Complex (NPC) Disassembly"/>
</dbReference>
<dbReference type="Reactome" id="R-MMU-3371453">
    <property type="pathway name" value="Regulation of HSF1-mediated heat shock response"/>
</dbReference>
<dbReference type="Reactome" id="R-MMU-4085377">
    <property type="pathway name" value="SUMOylation of SUMOylation proteins"/>
</dbReference>
<dbReference type="Reactome" id="R-MMU-4551638">
    <property type="pathway name" value="SUMOylation of chromatin organization proteins"/>
</dbReference>
<dbReference type="Reactome" id="R-MMU-4570464">
    <property type="pathway name" value="SUMOylation of RNA binding proteins"/>
</dbReference>
<dbReference type="Reactome" id="R-MMU-4615885">
    <property type="pathway name" value="SUMOylation of DNA replication proteins"/>
</dbReference>
<dbReference type="Reactome" id="R-MMU-5578749">
    <property type="pathway name" value="Transcriptional regulation by small RNAs"/>
</dbReference>
<dbReference type="BioGRID-ORCS" id="54563">
    <property type="hits" value="5 hits in 79 CRISPR screens"/>
</dbReference>
<dbReference type="ChiTaRS" id="Nup210">
    <property type="organism name" value="mouse"/>
</dbReference>
<dbReference type="PRO" id="PR:Q9QY81"/>
<dbReference type="Proteomes" id="UP000000589">
    <property type="component" value="Chromosome 6"/>
</dbReference>
<dbReference type="RNAct" id="Q9QY81">
    <property type="molecule type" value="protein"/>
</dbReference>
<dbReference type="Bgee" id="ENSMUSG00000030091">
    <property type="expression patterns" value="Expressed in peripheral lymph node and 239 other cell types or tissues"/>
</dbReference>
<dbReference type="ExpressionAtlas" id="Q9QY81">
    <property type="expression patterns" value="baseline and differential"/>
</dbReference>
<dbReference type="GO" id="GO:0005789">
    <property type="term" value="C:endoplasmic reticulum membrane"/>
    <property type="evidence" value="ECO:0007669"/>
    <property type="project" value="UniProtKB-SubCell"/>
</dbReference>
<dbReference type="GO" id="GO:0005635">
    <property type="term" value="C:nuclear envelope"/>
    <property type="evidence" value="ECO:0000314"/>
    <property type="project" value="MGI"/>
</dbReference>
<dbReference type="GO" id="GO:0031965">
    <property type="term" value="C:nuclear membrane"/>
    <property type="evidence" value="ECO:0007669"/>
    <property type="project" value="UniProtKB-SubCell"/>
</dbReference>
<dbReference type="GO" id="GO:0005643">
    <property type="term" value="C:nuclear pore"/>
    <property type="evidence" value="ECO:0000266"/>
    <property type="project" value="MGI"/>
</dbReference>
<dbReference type="GO" id="GO:0051028">
    <property type="term" value="P:mRNA transport"/>
    <property type="evidence" value="ECO:0007669"/>
    <property type="project" value="UniProtKB-KW"/>
</dbReference>
<dbReference type="GO" id="GO:0006913">
    <property type="term" value="P:nucleocytoplasmic transport"/>
    <property type="evidence" value="ECO:0000303"/>
    <property type="project" value="ComplexPortal"/>
</dbReference>
<dbReference type="GO" id="GO:0015031">
    <property type="term" value="P:protein transport"/>
    <property type="evidence" value="ECO:0007669"/>
    <property type="project" value="UniProtKB-KW"/>
</dbReference>
<dbReference type="GO" id="GO:0065003">
    <property type="term" value="P:protein-containing complex assembly"/>
    <property type="evidence" value="ECO:0007669"/>
    <property type="project" value="Ensembl"/>
</dbReference>
<dbReference type="InterPro" id="IPR003343">
    <property type="entry name" value="Big_2"/>
</dbReference>
<dbReference type="InterPro" id="IPR056897">
    <property type="entry name" value="Ig_NUP210_4th"/>
</dbReference>
<dbReference type="InterPro" id="IPR056898">
    <property type="entry name" value="Ig_NUP210_6th"/>
</dbReference>
<dbReference type="InterPro" id="IPR056899">
    <property type="entry name" value="Ig_NUP210_9th"/>
</dbReference>
<dbReference type="InterPro" id="IPR008964">
    <property type="entry name" value="Invasin/intimin_cell_adhesion"/>
</dbReference>
<dbReference type="InterPro" id="IPR045197">
    <property type="entry name" value="NUP210-like"/>
</dbReference>
<dbReference type="InterPro" id="IPR055096">
    <property type="entry name" value="NUP210_Ig1"/>
</dbReference>
<dbReference type="InterPro" id="IPR055094">
    <property type="entry name" value="NUP210_Ig15"/>
</dbReference>
<dbReference type="InterPro" id="IPR055097">
    <property type="entry name" value="NUP210_Ig2"/>
</dbReference>
<dbReference type="InterPro" id="IPR055098">
    <property type="entry name" value="NUP210_Ig3"/>
</dbReference>
<dbReference type="InterPro" id="IPR055099">
    <property type="entry name" value="NUP210_Ig7"/>
</dbReference>
<dbReference type="InterPro" id="IPR055095">
    <property type="entry name" value="NUP210_Ig_C"/>
</dbReference>
<dbReference type="PANTHER" id="PTHR23019:SF2">
    <property type="entry name" value="NUCLEAR PORE MEMBRANE GLYCOPROTEIN 210"/>
    <property type="match status" value="1"/>
</dbReference>
<dbReference type="PANTHER" id="PTHR23019">
    <property type="entry name" value="NUCLEAR PORE MEMBRANE GLYCOPROTEIN GP210-RELATED"/>
    <property type="match status" value="1"/>
</dbReference>
<dbReference type="Pfam" id="PF02368">
    <property type="entry name" value="Big_2"/>
    <property type="match status" value="1"/>
</dbReference>
<dbReference type="Pfam" id="PF22959">
    <property type="entry name" value="Ig_NUP210_15th"/>
    <property type="match status" value="1"/>
</dbReference>
<dbReference type="Pfam" id="PF25354">
    <property type="entry name" value="Ig_NUP210_16th"/>
    <property type="match status" value="1"/>
</dbReference>
<dbReference type="Pfam" id="PF22967">
    <property type="entry name" value="Ig_NUP210_1st"/>
    <property type="match status" value="1"/>
</dbReference>
<dbReference type="Pfam" id="PF22969">
    <property type="entry name" value="Ig_NUP210_2nd"/>
    <property type="match status" value="1"/>
</dbReference>
<dbReference type="Pfam" id="PF22963">
    <property type="entry name" value="Ig_NUP210_3rd"/>
    <property type="match status" value="1"/>
</dbReference>
<dbReference type="Pfam" id="PF24991">
    <property type="entry name" value="Ig_NUP210_4th"/>
    <property type="match status" value="1"/>
</dbReference>
<dbReference type="Pfam" id="PF24935">
    <property type="entry name" value="Ig_NUP210_6th"/>
    <property type="match status" value="1"/>
</dbReference>
<dbReference type="Pfam" id="PF22962">
    <property type="entry name" value="Ig_NUP210_7th"/>
    <property type="match status" value="1"/>
</dbReference>
<dbReference type="Pfam" id="PF24902">
    <property type="entry name" value="Ig_NUP210_9th"/>
    <property type="match status" value="1"/>
</dbReference>
<dbReference type="Pfam" id="PF22957">
    <property type="entry name" value="NUP210_Ig"/>
    <property type="match status" value="1"/>
</dbReference>
<dbReference type="SMART" id="SM00635">
    <property type="entry name" value="BID_2"/>
    <property type="match status" value="1"/>
</dbReference>
<dbReference type="SUPFAM" id="SSF49373">
    <property type="entry name" value="Invasin/intimin cell-adhesion fragments"/>
    <property type="match status" value="1"/>
</dbReference>
<proteinExistence type="evidence at protein level"/>
<keyword id="KW-0256">Endoplasmic reticulum</keyword>
<keyword id="KW-0325">Glycoprotein</keyword>
<keyword id="KW-0472">Membrane</keyword>
<keyword id="KW-0509">mRNA transport</keyword>
<keyword id="KW-0906">Nuclear pore complex</keyword>
<keyword id="KW-0539">Nucleus</keyword>
<keyword id="KW-0597">Phosphoprotein</keyword>
<keyword id="KW-0653">Protein transport</keyword>
<keyword id="KW-1185">Reference proteome</keyword>
<keyword id="KW-0732">Signal</keyword>
<keyword id="KW-0811">Translocation</keyword>
<keyword id="KW-0812">Transmembrane</keyword>
<keyword id="KW-1133">Transmembrane helix</keyword>
<keyword id="KW-0813">Transport</keyword>
<protein>
    <recommendedName>
        <fullName>Nuclear pore membrane glycoprotein 210</fullName>
        <shortName>Nuclear pore protein gp210</shortName>
    </recommendedName>
    <alternativeName>
        <fullName>Nuclear envelope pore membrane protein POM 210</fullName>
        <shortName>POM210</shortName>
    </alternativeName>
    <alternativeName>
        <fullName>Nucleoporin Nup210</fullName>
    </alternativeName>
    <alternativeName>
        <fullName>Pore membrane protein of 210 kDa</fullName>
    </alternativeName>
</protein>
<evidence type="ECO:0000250" key="1"/>
<evidence type="ECO:0000250" key="2">
    <source>
        <dbReference type="UniProtKB" id="Q8TEM1"/>
    </source>
</evidence>
<evidence type="ECO:0000255" key="3"/>
<evidence type="ECO:0000269" key="4">
    <source>
    </source>
</evidence>
<evidence type="ECO:0000305" key="5"/>
<evidence type="ECO:0007744" key="6">
    <source>
    </source>
</evidence>
<evidence type="ECO:0007744" key="7">
    <source>
    </source>
</evidence>
<evidence type="ECO:0007744" key="8">
    <source>
    </source>
</evidence>
<accession>Q9QY81</accession>
<accession>Q3U031</accession>
<accession>Q69ZW2</accession>
<accession>Q7TQM1</accession>
<comment type="function">
    <text>Nucleoporin essential for nuclear pore assembly and fusion, nuclear pore spacing, as well as structural integrity.</text>
</comment>
<comment type="subunit">
    <text evidence="1">Forms dimers and possibly higher-order oligomers.</text>
</comment>
<comment type="subcellular location">
    <subcellularLocation>
        <location evidence="1">Nucleus</location>
        <location evidence="1">Nuclear pore complex</location>
    </subcellularLocation>
    <subcellularLocation>
        <location evidence="1">Nucleus membrane</location>
        <topology evidence="1">Single-pass type I membrane protein</topology>
    </subcellularLocation>
    <subcellularLocation>
        <location evidence="1">Endoplasmic reticulum membrane</location>
        <topology evidence="1">Single-pass type I membrane protein</topology>
    </subcellularLocation>
</comment>
<comment type="developmental stage">
    <text evidence="4">Preferential expressed in epithelial cells. In the kidney, expression was seen in both the epithelium derived from the ureteric tree and the mesenchyme-derived epithelium. In other tissues of 13-day-old embryos, expression was also confined to the epithelium. In nervous tissues, mainly expressed in the olfactory epithelium and walls of the lateral ventricle. Weak expression was seen in the heart.</text>
</comment>
<comment type="PTM">
    <text evidence="1">N-glycosylated, but not all potential glycosylation sites may be used. Contains high-mannose type oligosaccharides (By similarity).</text>
</comment>
<comment type="PTM">
    <text evidence="1">Phosphorylated at Ser-1880 in mitosis specifically; not phosphorylated in interphase.</text>
</comment>
<comment type="similarity">
    <text evidence="5">Belongs to the NUP210 family.</text>
</comment>
<gene>
    <name type="primary">Nup210</name>
    <name type="synonym">Kiaa0906</name>
</gene>
<feature type="signal peptide" evidence="1">
    <location>
        <begin position="1"/>
        <end position="26"/>
    </location>
</feature>
<feature type="chain" id="PRO_0000236047" description="Nuclear pore membrane glycoprotein 210">
    <location>
        <begin position="27"/>
        <end position="1886"/>
    </location>
</feature>
<feature type="topological domain" description="Perinuclear space" evidence="5">
    <location>
        <begin position="27"/>
        <end position="1808"/>
    </location>
</feature>
<feature type="transmembrane region" description="Helical" evidence="3">
    <location>
        <begin position="1809"/>
        <end position="1829"/>
    </location>
</feature>
<feature type="topological domain" description="Cytoplasmic" evidence="5">
    <location>
        <begin position="1830"/>
        <end position="1886"/>
    </location>
</feature>
<feature type="domain" description="BIG2" evidence="3">
    <location>
        <begin position="1078"/>
        <end position="1151"/>
    </location>
</feature>
<feature type="modified residue" description="Phosphoserine" evidence="8">
    <location>
        <position position="1839"/>
    </location>
</feature>
<feature type="modified residue" description="Phosphothreonine" evidence="6 7 8">
    <location>
        <position position="1844"/>
    </location>
</feature>
<feature type="modified residue" description="Phosphoserine" evidence="8">
    <location>
        <position position="1873"/>
    </location>
</feature>
<feature type="modified residue" description="Phosphoserine" evidence="2">
    <location>
        <position position="1876"/>
    </location>
</feature>
<feature type="modified residue" description="Phosphoserine" evidence="2">
    <location>
        <position position="1880"/>
    </location>
</feature>
<feature type="modified residue" description="Phosphoserine" evidence="2">
    <location>
        <position position="1885"/>
    </location>
</feature>
<feature type="glycosylation site" description="N-linked (GlcNAc...) asparagine" evidence="3">
    <location>
        <position position="44"/>
    </location>
</feature>
<feature type="glycosylation site" description="N-linked (GlcNAc...) asparagine" evidence="3">
    <location>
        <position position="337"/>
    </location>
</feature>
<feature type="glycosylation site" description="N-linked (GlcNAc...) asparagine" evidence="3">
    <location>
        <position position="405"/>
    </location>
</feature>
<feature type="glycosylation site" description="N-linked (GlcNAc...) asparagine" evidence="3">
    <location>
        <position position="484"/>
    </location>
</feature>
<feature type="glycosylation site" description="N-linked (GlcNAc...) asparagine" evidence="3">
    <location>
        <position position="681"/>
    </location>
</feature>
<feature type="glycosylation site" description="N-linked (GlcNAc...) asparagine" evidence="3">
    <location>
        <position position="801"/>
    </location>
</feature>
<feature type="glycosylation site" description="N-linked (GlcNAc...) asparagine" evidence="3">
    <location>
        <position position="926"/>
    </location>
</feature>
<feature type="glycosylation site" description="N-linked (GlcNAc...) asparagine" evidence="3">
    <location>
        <position position="1039"/>
    </location>
</feature>
<feature type="glycosylation site" description="N-linked (GlcNAc...) asparagine" evidence="3">
    <location>
        <position position="1116"/>
    </location>
</feature>
<feature type="glycosylation site" description="N-linked (GlcNAc...) asparagine" evidence="3">
    <location>
        <position position="1135"/>
    </location>
</feature>
<feature type="glycosylation site" description="N-linked (GlcNAc...) asparagine" evidence="3">
    <location>
        <position position="1362"/>
    </location>
</feature>
<feature type="glycosylation site" description="N-linked (GlcNAc...) asparagine" evidence="3">
    <location>
        <position position="1441"/>
    </location>
</feature>
<feature type="sequence conflict" description="In Ref. 1; AAF21969." evidence="5" ref="1">
    <original>L</original>
    <variation>V</variation>
    <location>
        <position position="14"/>
    </location>
</feature>
<feature type="sequence conflict" description="In Ref. 1; AAF21969." evidence="5" ref="1">
    <original>F</original>
    <variation>G</variation>
    <location>
        <position position="37"/>
    </location>
</feature>
<feature type="sequence conflict" description="In Ref. 1; AAF21969." evidence="5" ref="1">
    <original>LR</original>
    <variation>VA</variation>
    <location>
        <begin position="107"/>
        <end position="108"/>
    </location>
</feature>
<feature type="sequence conflict" description="In Ref. 1; AAF21969." evidence="5" ref="1">
    <original>A</original>
    <variation>S</variation>
    <location>
        <position position="420"/>
    </location>
</feature>
<feature type="sequence conflict" description="In Ref. 4; BAE34024." evidence="5" ref="4">
    <original>L</original>
    <variation>F</variation>
    <location>
        <position position="425"/>
    </location>
</feature>
<feature type="sequence conflict" description="In Ref. 1; AAF21969." evidence="5" ref="1">
    <original>SV</original>
    <variation>RE</variation>
    <location>
        <begin position="512"/>
        <end position="513"/>
    </location>
</feature>
<feature type="sequence conflict" description="In Ref. 1; AAF21969." evidence="5" ref="1">
    <original>HD</original>
    <variation>QH</variation>
    <location>
        <begin position="517"/>
        <end position="518"/>
    </location>
</feature>
<feature type="sequence conflict" description="In Ref. 1; AAF21969." evidence="5" ref="1">
    <original>R</original>
    <variation>K</variation>
    <location>
        <position position="597"/>
    </location>
</feature>
<feature type="sequence conflict" description="In Ref. 2." evidence="5" ref="2">
    <location>
        <begin position="719"/>
        <end position="762"/>
    </location>
</feature>
<feature type="sequence conflict" description="In Ref. 4; BAE34024." evidence="5" ref="4">
    <original>Q</original>
    <variation>E</variation>
    <location>
        <position position="808"/>
    </location>
</feature>
<feature type="sequence conflict" description="In Ref. 1; AAF21969." evidence="5" ref="1">
    <original>SRP</original>
    <variation>FPR</variation>
    <location>
        <begin position="812"/>
        <end position="814"/>
    </location>
</feature>
<feature type="sequence conflict" description="In Ref. 4; BAE34024." evidence="5" ref="4">
    <original>I</original>
    <variation>V</variation>
    <location>
        <position position="904"/>
    </location>
</feature>
<feature type="sequence conflict" description="In Ref. 4; BAE34024." evidence="5" ref="4">
    <original>A</original>
    <variation>T</variation>
    <location>
        <position position="969"/>
    </location>
</feature>
<feature type="sequence conflict" description="In Ref. 1; AAF21969." evidence="5" ref="1">
    <original>HV</original>
    <variation>QL</variation>
    <location>
        <begin position="974"/>
        <end position="975"/>
    </location>
</feature>
<feature type="sequence conflict" description="In Ref. 1; AAF21969." evidence="5" ref="1">
    <original>KL</original>
    <variation>NW</variation>
    <location>
        <begin position="1020"/>
        <end position="1021"/>
    </location>
</feature>
<feature type="sequence conflict" description="In Ref. 1; AAF21969." evidence="5" ref="1">
    <original>V</original>
    <variation>C</variation>
    <location>
        <position position="1049"/>
    </location>
</feature>
<feature type="sequence conflict" description="In Ref. 1; AAF21969." evidence="5" ref="1">
    <original>V</original>
    <variation>L</variation>
    <location>
        <position position="1256"/>
    </location>
</feature>